<evidence type="ECO:0000250" key="1">
    <source>
        <dbReference type="UniProtKB" id="G5EGP4"/>
    </source>
</evidence>
<evidence type="ECO:0000250" key="2">
    <source>
        <dbReference type="UniProtKB" id="P25286"/>
    </source>
</evidence>
<evidence type="ECO:0000250" key="3">
    <source>
        <dbReference type="UniProtKB" id="P32563"/>
    </source>
</evidence>
<evidence type="ECO:0000250" key="4">
    <source>
        <dbReference type="UniProtKB" id="Q29466"/>
    </source>
</evidence>
<evidence type="ECO:0000250" key="5">
    <source>
        <dbReference type="UniProtKB" id="Q93050"/>
    </source>
</evidence>
<evidence type="ECO:0000255" key="6"/>
<evidence type="ECO:0000305" key="7"/>
<accession>Q8AVM5</accession>
<dbReference type="EMBL" id="BC041732">
    <property type="protein sequence ID" value="AAH41732.1"/>
    <property type="molecule type" value="mRNA"/>
</dbReference>
<dbReference type="RefSeq" id="NP_001080294.1">
    <property type="nucleotide sequence ID" value="NM_001086825.1"/>
</dbReference>
<dbReference type="SMR" id="Q8AVM5"/>
<dbReference type="DNASU" id="379986"/>
<dbReference type="AGR" id="Xenbase:XB-GENE-959351"/>
<dbReference type="Xenbase" id="XB-GENE-959351">
    <property type="gene designation" value="atp6v0a1.L"/>
</dbReference>
<dbReference type="Proteomes" id="UP000186698">
    <property type="component" value="Unplaced"/>
</dbReference>
<dbReference type="Bgee" id="379986">
    <property type="expression patterns" value="Expressed in brain and 19 other cell types or tissues"/>
</dbReference>
<dbReference type="GO" id="GO:0030665">
    <property type="term" value="C:clathrin-coated vesicle membrane"/>
    <property type="evidence" value="ECO:0007669"/>
    <property type="project" value="UniProtKB-SubCell"/>
</dbReference>
<dbReference type="GO" id="GO:0042470">
    <property type="term" value="C:melanosome"/>
    <property type="evidence" value="ECO:0007669"/>
    <property type="project" value="UniProtKB-SubCell"/>
</dbReference>
<dbReference type="GO" id="GO:0005886">
    <property type="term" value="C:plasma membrane"/>
    <property type="evidence" value="ECO:0000318"/>
    <property type="project" value="GO_Central"/>
</dbReference>
<dbReference type="GO" id="GO:0030672">
    <property type="term" value="C:synaptic vesicle membrane"/>
    <property type="evidence" value="ECO:0007669"/>
    <property type="project" value="UniProtKB-SubCell"/>
</dbReference>
<dbReference type="GO" id="GO:0016471">
    <property type="term" value="C:vacuolar proton-transporting V-type ATPase complex"/>
    <property type="evidence" value="ECO:0000318"/>
    <property type="project" value="GO_Central"/>
</dbReference>
<dbReference type="GO" id="GO:0000220">
    <property type="term" value="C:vacuolar proton-transporting V-type ATPase, V0 domain"/>
    <property type="evidence" value="ECO:0007669"/>
    <property type="project" value="InterPro"/>
</dbReference>
<dbReference type="GO" id="GO:0051117">
    <property type="term" value="F:ATPase binding"/>
    <property type="evidence" value="ECO:0000318"/>
    <property type="project" value="GO_Central"/>
</dbReference>
<dbReference type="GO" id="GO:0046961">
    <property type="term" value="F:proton-transporting ATPase activity, rotational mechanism"/>
    <property type="evidence" value="ECO:0007669"/>
    <property type="project" value="InterPro"/>
</dbReference>
<dbReference type="GO" id="GO:0007035">
    <property type="term" value="P:vacuolar acidification"/>
    <property type="evidence" value="ECO:0000318"/>
    <property type="project" value="GO_Central"/>
</dbReference>
<dbReference type="InterPro" id="IPR002490">
    <property type="entry name" value="V-ATPase_116kDa_su"/>
</dbReference>
<dbReference type="InterPro" id="IPR026028">
    <property type="entry name" value="V-type_ATPase_116kDa_su_euka"/>
</dbReference>
<dbReference type="PANTHER" id="PTHR11629:SF68">
    <property type="entry name" value="V-TYPE PROTON ATPASE 116 KDA SUBUNIT A 1"/>
    <property type="match status" value="1"/>
</dbReference>
<dbReference type="PANTHER" id="PTHR11629">
    <property type="entry name" value="VACUOLAR PROTON ATPASES"/>
    <property type="match status" value="1"/>
</dbReference>
<dbReference type="Pfam" id="PF01496">
    <property type="entry name" value="V_ATPase_I"/>
    <property type="match status" value="1"/>
</dbReference>
<dbReference type="PIRSF" id="PIRSF001293">
    <property type="entry name" value="ATP6V0A1"/>
    <property type="match status" value="1"/>
</dbReference>
<proteinExistence type="evidence at transcript level"/>
<protein>
    <recommendedName>
        <fullName>V-type proton ATPase 116 kDa subunit a1</fullName>
        <shortName>V-ATPase 116 kDa subunit a1</shortName>
    </recommendedName>
    <alternativeName>
        <fullName>Vacuolar proton translocating ATPase 116 kDa subunit a isoform 1</fullName>
    </alternativeName>
</protein>
<sequence>MGELFRSEEMTLAQLFLQSEAAYCCVSELGELGKVQFRDLNPDVNVFQRKFVNEVRRCEEMDRKLRFVEKEVKKANISILDTGENPEVPFPRDIIDLEANFEKIEIELKEINTNQEALKRNFLELTELKFILRKTQQFFDEMADPDLLEESSTLLEPSEMGRGAPLRLGFVAGVINRERIPTFERMLWRVCRGNVFLRQAQIENPLEDPVTGDSVHKSVFIIFFQGDQLKNRVKKICEGFRASLYPCPETPQERKEMATGVNTRIEDLQMVLNQTEDHRQRVLQAAAKSLRVWFIKVRKMKAIYHTLNLCNIDVTQKCLIAEVWCPVADLDSIQFALRRGTEHSGSTVPSILNRMQTNQTPPTYNKTNKFTYGFQNLVDAYGIGSYREINPAPYTIITFPFLFAVMFGDFGHGILMTLFAVWMVVRESRILSQKIDNELFSMMFSGRYIILLMGLFSTYTGLIYNDCFSKALNLFGSSWSVRPMFTDTWSEDLLKHTSVLQLNPNVTGVFNGPYPFGIDPIWSLATNKLTFLNSFKMKMSVILGIIHMIFGVALSVLNHIYFKKPLNIYLSFIPEMIFMTTLFGYLVILIIYKWCAYDVSTSMVAPSLLIHFINMFLFSYQDTSLPMLYKGQMGLQCFLVVCAIICVPWMLVLKPLILRRQYLRRKHLGTHNFGGIRVGNGPTEEDAEIIQHDQLSMHSDEEEEFDFGDTVVHQAIHTIEYCLGCISNTASYLRLWALSLAHAQLSEVLWTMVMHIGLNIRSLGGGIALVFIFSAFATLTIAILLIMEGLSAFLHALRLHWVEFRNKFYMGTGFKFLPFSFETIWEGKFDD</sequence>
<feature type="chain" id="PRO_0000317418" description="V-type proton ATPase 116 kDa subunit a1">
    <location>
        <begin position="1"/>
        <end position="831"/>
    </location>
</feature>
<feature type="topological domain" description="Cytoplasmic" evidence="6">
    <location>
        <begin position="1"/>
        <end position="388"/>
    </location>
</feature>
<feature type="transmembrane region" description="Helical" evidence="6">
    <location>
        <begin position="389"/>
        <end position="407"/>
    </location>
</feature>
<feature type="topological domain" description="Vacuolar" evidence="6">
    <location>
        <begin position="408"/>
        <end position="409"/>
    </location>
</feature>
<feature type="transmembrane region" description="Helical" evidence="6">
    <location>
        <begin position="410"/>
        <end position="426"/>
    </location>
</feature>
<feature type="topological domain" description="Cytoplasmic" evidence="6">
    <location>
        <begin position="427"/>
        <end position="441"/>
    </location>
</feature>
<feature type="transmembrane region" description="Helical" evidence="6">
    <location>
        <begin position="442"/>
        <end position="471"/>
    </location>
</feature>
<feature type="topological domain" description="Vacuolar" evidence="6">
    <location>
        <begin position="472"/>
        <end position="534"/>
    </location>
</feature>
<feature type="transmembrane region" description="Helical" evidence="6">
    <location>
        <begin position="535"/>
        <end position="554"/>
    </location>
</feature>
<feature type="topological domain" description="Cytoplasmic" evidence="6">
    <location>
        <begin position="555"/>
        <end position="572"/>
    </location>
</feature>
<feature type="transmembrane region" description="Helical" evidence="6">
    <location>
        <begin position="573"/>
        <end position="593"/>
    </location>
</feature>
<feature type="topological domain" description="Vacuolar" evidence="6">
    <location>
        <begin position="594"/>
        <end position="638"/>
    </location>
</feature>
<feature type="transmembrane region" description="Helical" evidence="6">
    <location>
        <begin position="639"/>
        <end position="658"/>
    </location>
</feature>
<feature type="topological domain" description="Cytoplasmic" evidence="6">
    <location>
        <begin position="659"/>
        <end position="718"/>
    </location>
</feature>
<feature type="transmembrane region" description="Helical" evidence="6">
    <location>
        <begin position="719"/>
        <end position="743"/>
    </location>
</feature>
<feature type="topological domain" description="Vacuolar" evidence="6">
    <location>
        <begin position="744"/>
        <end position="764"/>
    </location>
</feature>
<feature type="transmembrane region" description="Helical" evidence="6">
    <location>
        <begin position="765"/>
        <end position="803"/>
    </location>
</feature>
<feature type="topological domain" description="Cytoplasmic" evidence="6">
    <location>
        <begin position="804"/>
        <end position="831"/>
    </location>
</feature>
<name>VPP1_XENLA</name>
<keyword id="KW-0968">Cytoplasmic vesicle</keyword>
<keyword id="KW-0375">Hydrogen ion transport</keyword>
<keyword id="KW-0406">Ion transport</keyword>
<keyword id="KW-0472">Membrane</keyword>
<keyword id="KW-1185">Reference proteome</keyword>
<keyword id="KW-0770">Synapse</keyword>
<keyword id="KW-0812">Transmembrane</keyword>
<keyword id="KW-1133">Transmembrane helix</keyword>
<keyword id="KW-0813">Transport</keyword>
<reference key="1">
    <citation type="submission" date="2002-12" db="EMBL/GenBank/DDBJ databases">
        <authorList>
            <consortium name="NIH - Xenopus Gene Collection (XGC) project"/>
        </authorList>
    </citation>
    <scope>NUCLEOTIDE SEQUENCE [LARGE SCALE MRNA]</scope>
    <source>
        <tissue>Embryo</tissue>
    </source>
</reference>
<organism>
    <name type="scientific">Xenopus laevis</name>
    <name type="common">African clawed frog</name>
    <dbReference type="NCBI Taxonomy" id="8355"/>
    <lineage>
        <taxon>Eukaryota</taxon>
        <taxon>Metazoa</taxon>
        <taxon>Chordata</taxon>
        <taxon>Craniata</taxon>
        <taxon>Vertebrata</taxon>
        <taxon>Euteleostomi</taxon>
        <taxon>Amphibia</taxon>
        <taxon>Batrachia</taxon>
        <taxon>Anura</taxon>
        <taxon>Pipoidea</taxon>
        <taxon>Pipidae</taxon>
        <taxon>Xenopodinae</taxon>
        <taxon>Xenopus</taxon>
        <taxon>Xenopus</taxon>
    </lineage>
</organism>
<comment type="function">
    <text evidence="1 3 4">Subunit of the V0 complex of vacuolar(H+)-ATPase (V-ATPase), a multisubunit enzyme composed of a peripheral complex (V1) that hydrolyzes ATP and a membrane integral complex (V0) that translocates protons (By similarity). V-ATPase is responsible for acidifying and maintaining the pH of intracellular compartments and in some cell types, is targeted to the plasma membrane, where it is responsible for acidifying the extracellular environment (By similarity). Required for assembly and activity of the vacuolar ATPase (By similarity).</text>
</comment>
<comment type="subunit">
    <text evidence="4">V-ATPase is a heteromultimeric enzyme made up of two complexes: the ATP-hydrolytic V1 complex and the proton translocation V0 complex (By similarity). The V1 complex consists of three catalytic AB heterodimers that form a heterohexamer, three peripheral stalks each consisting of EG heterodimers, one central rotor including subunits D and F, and the regulatory subunits C and H (By similarity). The proton translocation complex V0 consists of the proton transport subunit a, a ring of proteolipid subunits c9c'', rotary subunit d, subunits e and f, and two accessory subunits (By similarity).</text>
</comment>
<comment type="subcellular location">
    <subcellularLocation>
        <location evidence="2">Cytoplasmic vesicle</location>
        <location evidence="2">Clathrin-coated vesicle membrane</location>
        <topology evidence="6">Multi-pass membrane protein</topology>
    </subcellularLocation>
    <subcellularLocation>
        <location evidence="2">Cytoplasmic vesicle</location>
        <location evidence="2">Secretory vesicle</location>
        <location evidence="2">Synaptic vesicle membrane</location>
        <topology evidence="6">Multi-pass membrane protein</topology>
    </subcellularLocation>
    <subcellularLocation>
        <location evidence="5">Melanosome</location>
    </subcellularLocation>
</comment>
<comment type="similarity">
    <text evidence="7">Belongs to the V-ATPase 116 kDa subunit family.</text>
</comment>
<gene>
    <name type="primary">atp6v0a1</name>
</gene>